<dbReference type="EMBL" id="EU882160">
    <property type="protein sequence ID" value="ACG63496.1"/>
    <property type="molecule type" value="mRNA"/>
</dbReference>
<dbReference type="EMBL" id="AL808021">
    <property type="status" value="NOT_ANNOTATED_CDS"/>
    <property type="molecule type" value="Genomic_DNA"/>
</dbReference>
<dbReference type="EMBL" id="AK150439">
    <property type="protein sequence ID" value="BAE29561.1"/>
    <property type="molecule type" value="mRNA"/>
</dbReference>
<dbReference type="CCDS" id="CCDS36393.2">
    <molecule id="Q3UCQ1-1"/>
</dbReference>
<dbReference type="RefSeq" id="NP_001074401.2">
    <molecule id="Q3UCQ1-1"/>
    <property type="nucleotide sequence ID" value="NM_001080932.3"/>
</dbReference>
<dbReference type="RefSeq" id="NP_001349962.1">
    <molecule id="Q3UCQ1-2"/>
    <property type="nucleotide sequence ID" value="NM_001363033.1"/>
</dbReference>
<dbReference type="RefSeq" id="XP_006534145.1">
    <property type="nucleotide sequence ID" value="XM_006534082.1"/>
</dbReference>
<dbReference type="BMRB" id="Q3UCQ1"/>
<dbReference type="SMR" id="Q3UCQ1"/>
<dbReference type="BioGRID" id="213075">
    <property type="interactions" value="1"/>
</dbReference>
<dbReference type="FunCoup" id="Q3UCQ1">
    <property type="interactions" value="5422"/>
</dbReference>
<dbReference type="STRING" id="10090.ENSMUSP00000101719"/>
<dbReference type="GlyGen" id="Q3UCQ1">
    <property type="glycosylation" value="3 sites, 1 O-linked glycan (3 sites)"/>
</dbReference>
<dbReference type="iPTMnet" id="Q3UCQ1"/>
<dbReference type="PhosphoSitePlus" id="Q3UCQ1"/>
<dbReference type="jPOST" id="Q3UCQ1"/>
<dbReference type="PaxDb" id="10090-ENSMUSP00000101719"/>
<dbReference type="PeptideAtlas" id="Q3UCQ1"/>
<dbReference type="ProteomicsDB" id="267498">
    <molecule id="Q3UCQ1-1"/>
</dbReference>
<dbReference type="ProteomicsDB" id="267499">
    <molecule id="Q3UCQ1-2"/>
</dbReference>
<dbReference type="Pumba" id="Q3UCQ1"/>
<dbReference type="Antibodypedia" id="33026">
    <property type="antibodies" value="237 antibodies from 29 providers"/>
</dbReference>
<dbReference type="DNASU" id="68837"/>
<dbReference type="Ensembl" id="ENSMUST00000106113.2">
    <molecule id="Q3UCQ1-1"/>
    <property type="protein sequence ID" value="ENSMUSP00000101719.2"/>
    <property type="gene ID" value="ENSMUSG00000039275.10"/>
</dbReference>
<dbReference type="GeneID" id="68837"/>
<dbReference type="KEGG" id="mmu:68837"/>
<dbReference type="UCSC" id="uc007mvs.1">
    <molecule id="Q3UCQ1-2"/>
    <property type="organism name" value="mouse"/>
</dbReference>
<dbReference type="UCSC" id="uc011yjl.1">
    <molecule id="Q3UCQ1-1"/>
    <property type="organism name" value="mouse"/>
</dbReference>
<dbReference type="AGR" id="MGI:1916087"/>
<dbReference type="CTD" id="3607"/>
<dbReference type="MGI" id="MGI:1916087">
    <property type="gene designation" value="Foxk2"/>
</dbReference>
<dbReference type="VEuPathDB" id="HostDB:ENSMUSG00000039275"/>
<dbReference type="eggNOG" id="KOG2294">
    <property type="taxonomic scope" value="Eukaryota"/>
</dbReference>
<dbReference type="GeneTree" id="ENSGT00940000155709"/>
<dbReference type="HOGENOM" id="CLU_022344_0_0_1"/>
<dbReference type="InParanoid" id="Q3UCQ1"/>
<dbReference type="OMA" id="AMKPVTY"/>
<dbReference type="OrthoDB" id="691130at2759"/>
<dbReference type="PhylomeDB" id="Q3UCQ1"/>
<dbReference type="TreeFam" id="TF325718"/>
<dbReference type="Reactome" id="R-MMU-5689603">
    <property type="pathway name" value="UCH proteinases"/>
</dbReference>
<dbReference type="BioGRID-ORCS" id="68837">
    <property type="hits" value="4 hits in 80 CRISPR screens"/>
</dbReference>
<dbReference type="ChiTaRS" id="Foxk2">
    <property type="organism name" value="mouse"/>
</dbReference>
<dbReference type="PRO" id="PR:Q3UCQ1"/>
<dbReference type="Proteomes" id="UP000000589">
    <property type="component" value="Chromosome 11"/>
</dbReference>
<dbReference type="RNAct" id="Q3UCQ1">
    <property type="molecule type" value="protein"/>
</dbReference>
<dbReference type="Bgee" id="ENSMUSG00000039275">
    <property type="expression patterns" value="Expressed in floor plate of midbrain and 270 other cell types or tissues"/>
</dbReference>
<dbReference type="GO" id="GO:0005737">
    <property type="term" value="C:cytoplasm"/>
    <property type="evidence" value="ECO:0000314"/>
    <property type="project" value="UniProtKB"/>
</dbReference>
<dbReference type="GO" id="GO:0005739">
    <property type="term" value="C:mitochondrion"/>
    <property type="evidence" value="ECO:0007669"/>
    <property type="project" value="Ensembl"/>
</dbReference>
<dbReference type="GO" id="GO:0005654">
    <property type="term" value="C:nucleoplasm"/>
    <property type="evidence" value="ECO:0007669"/>
    <property type="project" value="Ensembl"/>
</dbReference>
<dbReference type="GO" id="GO:0005634">
    <property type="term" value="C:nucleus"/>
    <property type="evidence" value="ECO:0000314"/>
    <property type="project" value="UniProtKB"/>
</dbReference>
<dbReference type="GO" id="GO:0001228">
    <property type="term" value="F:DNA-binding transcription activator activity, RNA polymerase II-specific"/>
    <property type="evidence" value="ECO:0007669"/>
    <property type="project" value="Ensembl"/>
</dbReference>
<dbReference type="GO" id="GO:0003700">
    <property type="term" value="F:DNA-binding transcription factor activity"/>
    <property type="evidence" value="ECO:0000314"/>
    <property type="project" value="UniProtKB"/>
</dbReference>
<dbReference type="GO" id="GO:0001227">
    <property type="term" value="F:DNA-binding transcription repressor activity, RNA polymerase II-specific"/>
    <property type="evidence" value="ECO:0000314"/>
    <property type="project" value="UniProtKB"/>
</dbReference>
<dbReference type="GO" id="GO:0000287">
    <property type="term" value="F:magnesium ion binding"/>
    <property type="evidence" value="ECO:0000250"/>
    <property type="project" value="UniProtKB"/>
</dbReference>
<dbReference type="GO" id="GO:0000978">
    <property type="term" value="F:RNA polymerase II cis-regulatory region sequence-specific DNA binding"/>
    <property type="evidence" value="ECO:0007669"/>
    <property type="project" value="Ensembl"/>
</dbReference>
<dbReference type="GO" id="GO:0043565">
    <property type="term" value="F:sequence-specific DNA binding"/>
    <property type="evidence" value="ECO:0000250"/>
    <property type="project" value="UniProtKB"/>
</dbReference>
<dbReference type="GO" id="GO:0000976">
    <property type="term" value="F:transcription cis-regulatory region binding"/>
    <property type="evidence" value="ECO:0000250"/>
    <property type="project" value="UniProtKB"/>
</dbReference>
<dbReference type="GO" id="GO:0061621">
    <property type="term" value="P:canonical glycolysis"/>
    <property type="evidence" value="ECO:0000314"/>
    <property type="project" value="UniProtKB"/>
</dbReference>
<dbReference type="GO" id="GO:0001678">
    <property type="term" value="P:intracellular glucose homeostasis"/>
    <property type="evidence" value="ECO:0000314"/>
    <property type="project" value="UniProtKB"/>
</dbReference>
<dbReference type="GO" id="GO:0010507">
    <property type="term" value="P:negative regulation of autophagy"/>
    <property type="evidence" value="ECO:0000314"/>
    <property type="project" value="UniProtKB"/>
</dbReference>
<dbReference type="GO" id="GO:0045892">
    <property type="term" value="P:negative regulation of DNA-templated transcription"/>
    <property type="evidence" value="ECO:0000314"/>
    <property type="project" value="UniProtKB"/>
</dbReference>
<dbReference type="GO" id="GO:0045893">
    <property type="term" value="P:positive regulation of DNA-templated transcription"/>
    <property type="evidence" value="ECO:0000314"/>
    <property type="project" value="UniProtKB"/>
</dbReference>
<dbReference type="GO" id="GO:0010906">
    <property type="term" value="P:regulation of glucose metabolic process"/>
    <property type="evidence" value="ECO:0000314"/>
    <property type="project" value="UniProtKB"/>
</dbReference>
<dbReference type="GO" id="GO:0042594">
    <property type="term" value="P:response to starvation"/>
    <property type="evidence" value="ECO:0000314"/>
    <property type="project" value="UniProtKB"/>
</dbReference>
<dbReference type="CDD" id="cd20055">
    <property type="entry name" value="FH_FOXK2"/>
    <property type="match status" value="1"/>
</dbReference>
<dbReference type="CDD" id="cd22723">
    <property type="entry name" value="FHA_FOXK2"/>
    <property type="match status" value="1"/>
</dbReference>
<dbReference type="FunFam" id="1.10.10.10:FF:000030">
    <property type="entry name" value="Forkhead box protein K2"/>
    <property type="match status" value="1"/>
</dbReference>
<dbReference type="FunFam" id="2.60.200.20:FF:000025">
    <property type="entry name" value="Forkhead box protein K2"/>
    <property type="match status" value="1"/>
</dbReference>
<dbReference type="Gene3D" id="2.60.200.20">
    <property type="match status" value="1"/>
</dbReference>
<dbReference type="Gene3D" id="1.10.10.10">
    <property type="entry name" value="Winged helix-like DNA-binding domain superfamily/Winged helix DNA-binding domain"/>
    <property type="match status" value="1"/>
</dbReference>
<dbReference type="InterPro" id="IPR047397">
    <property type="entry name" value="FH_FOXK2"/>
</dbReference>
<dbReference type="InterPro" id="IPR000253">
    <property type="entry name" value="FHA_dom"/>
</dbReference>
<dbReference type="InterPro" id="IPR047398">
    <property type="entry name" value="FHA_FOXK2"/>
</dbReference>
<dbReference type="InterPro" id="IPR001766">
    <property type="entry name" value="Fork_head_dom"/>
</dbReference>
<dbReference type="InterPro" id="IPR008984">
    <property type="entry name" value="SMAD_FHA_dom_sf"/>
</dbReference>
<dbReference type="InterPro" id="IPR018122">
    <property type="entry name" value="TF_fork_head_CS_1"/>
</dbReference>
<dbReference type="InterPro" id="IPR030456">
    <property type="entry name" value="TF_fork_head_CS_2"/>
</dbReference>
<dbReference type="InterPro" id="IPR036388">
    <property type="entry name" value="WH-like_DNA-bd_sf"/>
</dbReference>
<dbReference type="InterPro" id="IPR036390">
    <property type="entry name" value="WH_DNA-bd_sf"/>
</dbReference>
<dbReference type="PANTHER" id="PTHR45881">
    <property type="entry name" value="CHECKPOINT SUPPRESSOR 1-LIKE, ISOFORM A-RELATED"/>
    <property type="match status" value="1"/>
</dbReference>
<dbReference type="PANTHER" id="PTHR45881:SF3">
    <property type="entry name" value="FORKHEAD BOX PROTEIN K2"/>
    <property type="match status" value="1"/>
</dbReference>
<dbReference type="Pfam" id="PF00498">
    <property type="entry name" value="FHA"/>
    <property type="match status" value="1"/>
</dbReference>
<dbReference type="Pfam" id="PF00250">
    <property type="entry name" value="Forkhead"/>
    <property type="match status" value="1"/>
</dbReference>
<dbReference type="PRINTS" id="PR00053">
    <property type="entry name" value="FORKHEAD"/>
</dbReference>
<dbReference type="SMART" id="SM00339">
    <property type="entry name" value="FH"/>
    <property type="match status" value="1"/>
</dbReference>
<dbReference type="SMART" id="SM00240">
    <property type="entry name" value="FHA"/>
    <property type="match status" value="1"/>
</dbReference>
<dbReference type="SUPFAM" id="SSF49879">
    <property type="entry name" value="SMAD/FHA domain"/>
    <property type="match status" value="1"/>
</dbReference>
<dbReference type="SUPFAM" id="SSF46785">
    <property type="entry name" value="Winged helix' DNA-binding domain"/>
    <property type="match status" value="1"/>
</dbReference>
<dbReference type="PROSITE" id="PS50006">
    <property type="entry name" value="FHA_DOMAIN"/>
    <property type="match status" value="1"/>
</dbReference>
<dbReference type="PROSITE" id="PS00657">
    <property type="entry name" value="FORK_HEAD_1"/>
    <property type="match status" value="1"/>
</dbReference>
<dbReference type="PROSITE" id="PS00658">
    <property type="entry name" value="FORK_HEAD_2"/>
    <property type="match status" value="1"/>
</dbReference>
<dbReference type="PROSITE" id="PS50039">
    <property type="entry name" value="FORK_HEAD_3"/>
    <property type="match status" value="1"/>
</dbReference>
<feature type="chain" id="PRO_0000261668" description="Forkhead box protein K2">
    <location>
        <begin position="1"/>
        <end position="651"/>
    </location>
</feature>
<feature type="domain" description="FHA" evidence="2">
    <location>
        <begin position="48"/>
        <end position="119"/>
    </location>
</feature>
<feature type="DNA-binding region" description="Fork-head" evidence="3">
    <location>
        <begin position="249"/>
        <end position="344"/>
    </location>
</feature>
<feature type="region of interest" description="Disordered" evidence="4">
    <location>
        <begin position="1"/>
        <end position="29"/>
    </location>
</feature>
<feature type="region of interest" description="Required for interaction with DVL2 and SUDS3" evidence="1">
    <location>
        <begin position="120"/>
        <end position="162"/>
    </location>
</feature>
<feature type="region of interest" description="Disordered" evidence="4">
    <location>
        <begin position="150"/>
        <end position="171"/>
    </location>
</feature>
<feature type="region of interest" description="Disordered" evidence="4">
    <location>
        <begin position="194"/>
        <end position="251"/>
    </location>
</feature>
<feature type="region of interest" description="DNA-binding; major groove" evidence="1">
    <location>
        <begin position="291"/>
        <end position="309"/>
    </location>
</feature>
<feature type="region of interest" description="DNA-binding; minor groove" evidence="1">
    <location>
        <begin position="319"/>
        <end position="323"/>
    </location>
</feature>
<feature type="region of interest" description="DNA-binding; minor groove" evidence="1">
    <location>
        <begin position="339"/>
        <end position="344"/>
    </location>
</feature>
<feature type="region of interest" description="Disordered" evidence="4">
    <location>
        <begin position="350"/>
        <end position="399"/>
    </location>
</feature>
<feature type="region of interest" description="Disordered" evidence="4">
    <location>
        <begin position="601"/>
        <end position="623"/>
    </location>
</feature>
<feature type="compositionally biased region" description="Low complexity" evidence="4">
    <location>
        <begin position="1"/>
        <end position="13"/>
    </location>
</feature>
<feature type="compositionally biased region" description="Gly residues" evidence="4">
    <location>
        <begin position="14"/>
        <end position="26"/>
    </location>
</feature>
<feature type="compositionally biased region" description="Polar residues" evidence="4">
    <location>
        <begin position="194"/>
        <end position="203"/>
    </location>
</feature>
<feature type="compositionally biased region" description="Basic and acidic residues" evidence="4">
    <location>
        <begin position="233"/>
        <end position="249"/>
    </location>
</feature>
<feature type="compositionally biased region" description="Polar residues" evidence="4">
    <location>
        <begin position="373"/>
        <end position="383"/>
    </location>
</feature>
<feature type="compositionally biased region" description="Polar residues" evidence="4">
    <location>
        <begin position="601"/>
        <end position="614"/>
    </location>
</feature>
<feature type="binding site" evidence="1">
    <location>
        <position position="301"/>
    </location>
    <ligand>
        <name>Mg(2+)</name>
        <dbReference type="ChEBI" id="CHEBI:18420"/>
    </ligand>
</feature>
<feature type="binding site" evidence="1">
    <location>
        <position position="302"/>
    </location>
    <ligand>
        <name>Mg(2+)</name>
        <dbReference type="ChEBI" id="CHEBI:18420"/>
    </ligand>
</feature>
<feature type="binding site" evidence="1">
    <location>
        <position position="304"/>
    </location>
    <ligand>
        <name>Mg(2+)</name>
        <dbReference type="ChEBI" id="CHEBI:18420"/>
    </ligand>
</feature>
<feature type="binding site" evidence="1">
    <location>
        <position position="307"/>
    </location>
    <ligand>
        <name>Mg(2+)</name>
        <dbReference type="ChEBI" id="CHEBI:18420"/>
    </ligand>
</feature>
<feature type="modified residue" description="Phosphoserine" evidence="1">
    <location>
        <position position="24"/>
    </location>
</feature>
<feature type="modified residue" description="Omega-N-methylarginine" evidence="1">
    <location>
        <position position="135"/>
    </location>
</feature>
<feature type="modified residue" description="Phosphoserine" evidence="1">
    <location>
        <position position="230"/>
    </location>
</feature>
<feature type="modified residue" description="Phosphoserine" evidence="18">
    <location>
        <position position="364"/>
    </location>
</feature>
<feature type="modified residue" description="Phosphoserine" evidence="17 18">
    <location>
        <position position="389"/>
    </location>
</feature>
<feature type="modified residue" description="Phosphoserine" evidence="18">
    <location>
        <position position="415"/>
    </location>
</feature>
<feature type="modified residue" description="Phosphoserine" evidence="18">
    <location>
        <position position="419"/>
    </location>
</feature>
<feature type="modified residue" description="Phosphoserine" evidence="18">
    <location>
        <position position="590"/>
    </location>
</feature>
<feature type="cross-link" description="Glycyl lysine isopeptide (Lys-Gly) (interchain with G-Cter in SUMO2)" evidence="1">
    <location>
        <position position="152"/>
    </location>
</feature>
<feature type="cross-link" description="Glycyl lysine isopeptide (Lys-Gly) (interchain with G-Cter in SUMO2)" evidence="1">
    <location>
        <position position="155"/>
    </location>
</feature>
<feature type="cross-link" description="Glycyl lysine isopeptide (Lys-Gly) (interchain with G-Cter in SUMO2)" evidence="1">
    <location>
        <position position="518"/>
    </location>
</feature>
<feature type="cross-link" description="Glycyl lysine isopeptide (Lys-Gly) (interchain with G-Cter in SUMO2)" evidence="1">
    <location>
        <position position="624"/>
    </location>
</feature>
<feature type="splice variant" id="VSP_052236" description="In isoform 2." evidence="11">
    <location>
        <begin position="517"/>
        <end position="586"/>
    </location>
</feature>
<feature type="sequence conflict" description="In Ref. 3; BAE29561." evidence="14" ref="3">
    <original>L</original>
    <variation>M</variation>
    <location>
        <position position="104"/>
    </location>
</feature>
<comment type="function">
    <text evidence="1 7 8 9 10">Transcriptional regulator involved in different processes such as glucose metabolism, aerobic glycolysis and autophagy (PubMed:25402684, PubMed:29861159, PubMed:30700909). Recognizes and binds the forkhead DNA sequence motif (5'-GTAAACA-3') and can both act as a transcription activator or repressor, depending on the context (PubMed:25402684, PubMed:29861159, PubMed:30700909). Together with FOXK1, acts as a key regulator of metabolic reprogramming towards aerobic glycolysis, a process in which glucose is converted to lactate in the presence of oxygen (PubMed:30700909). Acts by promoting expression of enzymes for glycolysis (such as hexokinase-2 (HK2), phosphofructokinase, pyruvate kinase (PKLR) and lactate dehydrogenase), while suppressing further oxidation of pyruvate in the mitochondria by up-regulating pyruvate dehydrogenase kinases PDK1 and PDK4 (PubMed:30700909). Probably plays a role in gluconeogenesis during overnight fasting, when lactate from white adipose tissue and muscle is the main substrate (PubMed:30700909). Together with FOXK1, acts as a negative regulator of autophagy in skeletal muscle: in response to starvation, enters the nucleus, binds the promoters of autophagy genes and represses their expression, preventing proteolysis of skeletal muscle proteins (PubMed:25402684). In addition to the 5'-GTAAACA-3' DNA motif, also binds the 5'-TGANTCA-3' palindromic DNA motif, and co-associates with JUN/AP-1 to activate transcription (By similarity). Also able to bind to a minimal DNA heteroduplex containing a G/T-mismatch with 5'-TRT[G/T]NB-3' sequence (By similarity). Binds to NFAT-like motifs (purine-rich) in the IL2 promoter (By similarity). Positively regulates WNT/beta-catenin signaling by translocating DVL proteins into the nucleus (By similarity). Accessory component of the polycomb repressive deubiquitinase (PR-DUB) complex; recruits the PR-DUB complex to specific FOXK2-bound genes (PubMed:32747411).</text>
</comment>
<comment type="subunit">
    <text evidence="1 7">Component of SIN3A-, but not SIN3B-, containing multiprotein complexes (PubMed:25402684). Interacts with DVL1, DVL2 (when phosphorylated) and DVL3; the interaction induces DVL2 nuclear translocation (By similarity). Interacts with SUDS3 (By similarity). Interacts with BAP1 (when phosphorylated); leading to recruit the PR-DUB complex and repress FOXK2 target genes (By similarity). Accessory component of the polycomb repressive deubiquitinase (PR-DUB) complex, at least composed of BAP1, one of ASXL1, ASXL2 or (probably) ASXL3 and one of MBD5 or MBD6 (By similarity). The PR-DUB core associates with a number of accessory proteins, including FOXK1, FOXK2, KDM1B, HCFC1 and OGT (By similarity).</text>
</comment>
<comment type="subcellular location">
    <subcellularLocation>
        <location evidence="3 6 7">Nucleus</location>
    </subcellularLocation>
    <subcellularLocation>
        <location evidence="7">Cytoplasm</location>
    </subcellularLocation>
</comment>
<comment type="alternative products">
    <event type="alternative splicing"/>
    <isoform>
        <id>Q3UCQ1-1</id>
        <name>1</name>
        <sequence type="displayed"/>
    </isoform>
    <isoform>
        <id>Q3UCQ1-2</id>
        <name evidence="5">2</name>
        <sequence type="described" ref="VSP_052236"/>
    </isoform>
</comment>
<comment type="tissue specificity">
    <text evidence="6">Expressed in a wide range of adult brain regions, namely the piriform cortex, the major islands of Calleja and cells lining the lateral ventricles, the bed nucleus of stria terminalis, the paraventricular thalamic nucleus, habenula and all structures of the hippocampus. Also present in the hypothalamus, cerebral cortex and in the Purkinje cell layer in the cerebellum. Additionally expressed in dopamine neurons of the substantia and more sparsely in the ventral tegmental area.</text>
</comment>
<comment type="developmental stage">
    <text evidence="6">At 12.5 dpc, expressed ubiquitously in the developing central nervous system. This pattern persists at 14.5 dpc and 16.5 dpc, with expression levels varying.</text>
</comment>
<comment type="domain">
    <text evidence="1">The C-terminal part of the DNA-binding domain may contribute to DNA recognition specificity.</text>
</comment>
<comment type="PTM">
    <text evidence="1">Hyperphosphorylated during mitosis by CDK1 and, to a lower extent, CDK2. Phosphorylation at Ser-364 and Ser-419 affects stability by promoting degradation.</text>
</comment>
<accession>Q3UCQ1</accession>
<accession>A2AN27</accession>
<accession>B5AZX0</accession>
<proteinExistence type="evidence at protein level"/>
<protein>
    <recommendedName>
        <fullName evidence="14">Forkhead box protein K2</fullName>
    </recommendedName>
    <alternativeName>
        <fullName evidence="12">Cellular transcription factor ILF-1</fullName>
    </alternativeName>
    <alternativeName>
        <fullName evidence="12">Interleukin enhancer-binding factor 1</fullName>
    </alternativeName>
</protein>
<evidence type="ECO:0000250" key="1">
    <source>
        <dbReference type="UniProtKB" id="Q01167"/>
    </source>
</evidence>
<evidence type="ECO:0000255" key="2">
    <source>
        <dbReference type="PROSITE-ProRule" id="PRU00086"/>
    </source>
</evidence>
<evidence type="ECO:0000255" key="3">
    <source>
        <dbReference type="PROSITE-ProRule" id="PRU00089"/>
    </source>
</evidence>
<evidence type="ECO:0000256" key="4">
    <source>
        <dbReference type="SAM" id="MobiDB-lite"/>
    </source>
</evidence>
<evidence type="ECO:0000269" key="5">
    <source>
    </source>
</evidence>
<evidence type="ECO:0000269" key="6">
    <source>
    </source>
</evidence>
<evidence type="ECO:0000269" key="7">
    <source>
    </source>
</evidence>
<evidence type="ECO:0000269" key="8">
    <source>
    </source>
</evidence>
<evidence type="ECO:0000269" key="9">
    <source>
    </source>
</evidence>
<evidence type="ECO:0000269" key="10">
    <source>
    </source>
</evidence>
<evidence type="ECO:0000303" key="11">
    <source>
    </source>
</evidence>
<evidence type="ECO:0000303" key="12">
    <source>
    </source>
</evidence>
<evidence type="ECO:0000303" key="13">
    <source ref="1"/>
</evidence>
<evidence type="ECO:0000305" key="14"/>
<evidence type="ECO:0000312" key="15">
    <source>
        <dbReference type="EMBL" id="BAE29561.1"/>
    </source>
</evidence>
<evidence type="ECO:0000312" key="16">
    <source>
        <dbReference type="MGI" id="MGI:1916087"/>
    </source>
</evidence>
<evidence type="ECO:0007744" key="17">
    <source>
    </source>
</evidence>
<evidence type="ECO:0007744" key="18">
    <source>
    </source>
</evidence>
<organism>
    <name type="scientific">Mus musculus</name>
    <name type="common">Mouse</name>
    <dbReference type="NCBI Taxonomy" id="10090"/>
    <lineage>
        <taxon>Eukaryota</taxon>
        <taxon>Metazoa</taxon>
        <taxon>Chordata</taxon>
        <taxon>Craniata</taxon>
        <taxon>Vertebrata</taxon>
        <taxon>Euteleostomi</taxon>
        <taxon>Mammalia</taxon>
        <taxon>Eutheria</taxon>
        <taxon>Euarchontoglires</taxon>
        <taxon>Glires</taxon>
        <taxon>Rodentia</taxon>
        <taxon>Myomorpha</taxon>
        <taxon>Muroidea</taxon>
        <taxon>Muridae</taxon>
        <taxon>Murinae</taxon>
        <taxon>Mus</taxon>
        <taxon>Mus</taxon>
    </lineage>
</organism>
<gene>
    <name evidence="13 16" type="primary">Foxk2</name>
    <name evidence="12" type="synonym">Ilf1</name>
</gene>
<reference evidence="14" key="1">
    <citation type="submission" date="2008-07" db="EMBL/GenBank/DDBJ databases">
        <title>Foxk2 is the mammalian homolog of yeast Fkh2, but is functionally distinct.</title>
        <authorList>
            <person name="Wijchers P.J.E.C."/>
            <person name="van der Heidee L.P."/>
            <person name="van den Akker W.M.R."/>
            <person name="Adolfs Y."/>
            <person name="Durston A.J."/>
            <person name="Hoekman M.F.M."/>
            <person name="Burbach J.P.H."/>
            <person name="Smidt M.P."/>
        </authorList>
    </citation>
    <scope>NUCLEOTIDE SEQUENCE [MRNA]</scope>
    <source>
        <strain>C57BL/6J</strain>
        <tissue>Midbrain</tissue>
    </source>
</reference>
<reference key="2">
    <citation type="journal article" date="2009" name="PLoS Biol.">
        <title>Lineage-specific biology revealed by a finished genome assembly of the mouse.</title>
        <authorList>
            <person name="Church D.M."/>
            <person name="Goodstadt L."/>
            <person name="Hillier L.W."/>
            <person name="Zody M.C."/>
            <person name="Goldstein S."/>
            <person name="She X."/>
            <person name="Bult C.J."/>
            <person name="Agarwala R."/>
            <person name="Cherry J.L."/>
            <person name="DiCuccio M."/>
            <person name="Hlavina W."/>
            <person name="Kapustin Y."/>
            <person name="Meric P."/>
            <person name="Maglott D."/>
            <person name="Birtle Z."/>
            <person name="Marques A.C."/>
            <person name="Graves T."/>
            <person name="Zhou S."/>
            <person name="Teague B."/>
            <person name="Potamousis K."/>
            <person name="Churas C."/>
            <person name="Place M."/>
            <person name="Herschleb J."/>
            <person name="Runnheim R."/>
            <person name="Forrest D."/>
            <person name="Amos-Landgraf J."/>
            <person name="Schwartz D.C."/>
            <person name="Cheng Z."/>
            <person name="Lindblad-Toh K."/>
            <person name="Eichler E.E."/>
            <person name="Ponting C.P."/>
        </authorList>
    </citation>
    <scope>NUCLEOTIDE SEQUENCE [LARGE SCALE GENOMIC DNA]</scope>
    <source>
        <strain>C57BL/6J</strain>
    </source>
</reference>
<reference evidence="15" key="3">
    <citation type="journal article" date="2005" name="Science">
        <title>The transcriptional landscape of the mammalian genome.</title>
        <authorList>
            <person name="Carninci P."/>
            <person name="Kasukawa T."/>
            <person name="Katayama S."/>
            <person name="Gough J."/>
            <person name="Frith M.C."/>
            <person name="Maeda N."/>
            <person name="Oyama R."/>
            <person name="Ravasi T."/>
            <person name="Lenhard B."/>
            <person name="Wells C."/>
            <person name="Kodzius R."/>
            <person name="Shimokawa K."/>
            <person name="Bajic V.B."/>
            <person name="Brenner S.E."/>
            <person name="Batalov S."/>
            <person name="Forrest A.R."/>
            <person name="Zavolan M."/>
            <person name="Davis M.J."/>
            <person name="Wilming L.G."/>
            <person name="Aidinis V."/>
            <person name="Allen J.E."/>
            <person name="Ambesi-Impiombato A."/>
            <person name="Apweiler R."/>
            <person name="Aturaliya R.N."/>
            <person name="Bailey T.L."/>
            <person name="Bansal M."/>
            <person name="Baxter L."/>
            <person name="Beisel K.W."/>
            <person name="Bersano T."/>
            <person name="Bono H."/>
            <person name="Chalk A.M."/>
            <person name="Chiu K.P."/>
            <person name="Choudhary V."/>
            <person name="Christoffels A."/>
            <person name="Clutterbuck D.R."/>
            <person name="Crowe M.L."/>
            <person name="Dalla E."/>
            <person name="Dalrymple B.P."/>
            <person name="de Bono B."/>
            <person name="Della Gatta G."/>
            <person name="di Bernardo D."/>
            <person name="Down T."/>
            <person name="Engstrom P."/>
            <person name="Fagiolini M."/>
            <person name="Faulkner G."/>
            <person name="Fletcher C.F."/>
            <person name="Fukushima T."/>
            <person name="Furuno M."/>
            <person name="Futaki S."/>
            <person name="Gariboldi M."/>
            <person name="Georgii-Hemming P."/>
            <person name="Gingeras T.R."/>
            <person name="Gojobori T."/>
            <person name="Green R.E."/>
            <person name="Gustincich S."/>
            <person name="Harbers M."/>
            <person name="Hayashi Y."/>
            <person name="Hensch T.K."/>
            <person name="Hirokawa N."/>
            <person name="Hill D."/>
            <person name="Huminiecki L."/>
            <person name="Iacono M."/>
            <person name="Ikeo K."/>
            <person name="Iwama A."/>
            <person name="Ishikawa T."/>
            <person name="Jakt M."/>
            <person name="Kanapin A."/>
            <person name="Katoh M."/>
            <person name="Kawasawa Y."/>
            <person name="Kelso J."/>
            <person name="Kitamura H."/>
            <person name="Kitano H."/>
            <person name="Kollias G."/>
            <person name="Krishnan S.P."/>
            <person name="Kruger A."/>
            <person name="Kummerfeld S.K."/>
            <person name="Kurochkin I.V."/>
            <person name="Lareau L.F."/>
            <person name="Lazarevic D."/>
            <person name="Lipovich L."/>
            <person name="Liu J."/>
            <person name="Liuni S."/>
            <person name="McWilliam S."/>
            <person name="Madan Babu M."/>
            <person name="Madera M."/>
            <person name="Marchionni L."/>
            <person name="Matsuda H."/>
            <person name="Matsuzawa S."/>
            <person name="Miki H."/>
            <person name="Mignone F."/>
            <person name="Miyake S."/>
            <person name="Morris K."/>
            <person name="Mottagui-Tabar S."/>
            <person name="Mulder N."/>
            <person name="Nakano N."/>
            <person name="Nakauchi H."/>
            <person name="Ng P."/>
            <person name="Nilsson R."/>
            <person name="Nishiguchi S."/>
            <person name="Nishikawa S."/>
            <person name="Nori F."/>
            <person name="Ohara O."/>
            <person name="Okazaki Y."/>
            <person name="Orlando V."/>
            <person name="Pang K.C."/>
            <person name="Pavan W.J."/>
            <person name="Pavesi G."/>
            <person name="Pesole G."/>
            <person name="Petrovsky N."/>
            <person name="Piazza S."/>
            <person name="Reed J."/>
            <person name="Reid J.F."/>
            <person name="Ring B.Z."/>
            <person name="Ringwald M."/>
            <person name="Rost B."/>
            <person name="Ruan Y."/>
            <person name="Salzberg S.L."/>
            <person name="Sandelin A."/>
            <person name="Schneider C."/>
            <person name="Schoenbach C."/>
            <person name="Sekiguchi K."/>
            <person name="Semple C.A."/>
            <person name="Seno S."/>
            <person name="Sessa L."/>
            <person name="Sheng Y."/>
            <person name="Shibata Y."/>
            <person name="Shimada H."/>
            <person name="Shimada K."/>
            <person name="Silva D."/>
            <person name="Sinclair B."/>
            <person name="Sperling S."/>
            <person name="Stupka E."/>
            <person name="Sugiura K."/>
            <person name="Sultana R."/>
            <person name="Takenaka Y."/>
            <person name="Taki K."/>
            <person name="Tammoja K."/>
            <person name="Tan S.L."/>
            <person name="Tang S."/>
            <person name="Taylor M.S."/>
            <person name="Tegner J."/>
            <person name="Teichmann S.A."/>
            <person name="Ueda H.R."/>
            <person name="van Nimwegen E."/>
            <person name="Verardo R."/>
            <person name="Wei C.L."/>
            <person name="Yagi K."/>
            <person name="Yamanishi H."/>
            <person name="Zabarovsky E."/>
            <person name="Zhu S."/>
            <person name="Zimmer A."/>
            <person name="Hide W."/>
            <person name="Bult C."/>
            <person name="Grimmond S.M."/>
            <person name="Teasdale R.D."/>
            <person name="Liu E.T."/>
            <person name="Brusic V."/>
            <person name="Quackenbush J."/>
            <person name="Wahlestedt C."/>
            <person name="Mattick J.S."/>
            <person name="Hume D.A."/>
            <person name="Kai C."/>
            <person name="Sasaki D."/>
            <person name="Tomaru Y."/>
            <person name="Fukuda S."/>
            <person name="Kanamori-Katayama M."/>
            <person name="Suzuki M."/>
            <person name="Aoki J."/>
            <person name="Arakawa T."/>
            <person name="Iida J."/>
            <person name="Imamura K."/>
            <person name="Itoh M."/>
            <person name="Kato T."/>
            <person name="Kawaji H."/>
            <person name="Kawagashira N."/>
            <person name="Kawashima T."/>
            <person name="Kojima M."/>
            <person name="Kondo S."/>
            <person name="Konno H."/>
            <person name="Nakano K."/>
            <person name="Ninomiya N."/>
            <person name="Nishio T."/>
            <person name="Okada M."/>
            <person name="Plessy C."/>
            <person name="Shibata K."/>
            <person name="Shiraki T."/>
            <person name="Suzuki S."/>
            <person name="Tagami M."/>
            <person name="Waki K."/>
            <person name="Watahiki A."/>
            <person name="Okamura-Oho Y."/>
            <person name="Suzuki H."/>
            <person name="Kawai J."/>
            <person name="Hayashizaki Y."/>
        </authorList>
    </citation>
    <scope>NUCLEOTIDE SEQUENCE [LARGE SCALE MRNA] OF 69-651 (ISOFORM 2)</scope>
    <source>
        <strain evidence="15">C57BL/6J</strain>
        <tissue evidence="15">Bone marrow</tissue>
    </source>
</reference>
<reference key="4">
    <citation type="journal article" date="2006" name="Brain Res.">
        <title>Identification of forkhead transcription factors in cortical and dopaminergic areas of the adult murine brain.</title>
        <authorList>
            <person name="Wijchers P.J.E.C."/>
            <person name="Hoekman M.F.M."/>
            <person name="Burbach J.P.H."/>
            <person name="Smidt M.P."/>
        </authorList>
    </citation>
    <scope>SUBCELLULAR LOCATION</scope>
    <scope>TISSUE SPECIFICITY</scope>
    <scope>DEVELOPMENTAL STAGE</scope>
</reference>
<reference key="5">
    <citation type="journal article" date="2007" name="Proc. Natl. Acad. Sci. U.S.A.">
        <title>Large-scale phosphorylation analysis of mouse liver.</title>
        <authorList>
            <person name="Villen J."/>
            <person name="Beausoleil S.A."/>
            <person name="Gerber S.A."/>
            <person name="Gygi S.P."/>
        </authorList>
    </citation>
    <scope>PHOSPHORYLATION [LARGE SCALE ANALYSIS] AT SER-389</scope>
    <scope>IDENTIFICATION BY MASS SPECTROMETRY [LARGE SCALE ANALYSIS]</scope>
    <source>
        <tissue>Liver</tissue>
    </source>
</reference>
<reference key="6">
    <citation type="journal article" date="2010" name="Cell">
        <title>A tissue-specific atlas of mouse protein phosphorylation and expression.</title>
        <authorList>
            <person name="Huttlin E.L."/>
            <person name="Jedrychowski M.P."/>
            <person name="Elias J.E."/>
            <person name="Goswami T."/>
            <person name="Rad R."/>
            <person name="Beausoleil S.A."/>
            <person name="Villen J."/>
            <person name="Haas W."/>
            <person name="Sowa M.E."/>
            <person name="Gygi S.P."/>
        </authorList>
    </citation>
    <scope>PHOSPHORYLATION [LARGE SCALE ANALYSIS] AT SER-364; SER-389; SER-415; SER-419 AND SER-590</scope>
    <scope>IDENTIFICATION BY MASS SPECTROMETRY [LARGE SCALE ANALYSIS]</scope>
    <source>
        <tissue>Brain</tissue>
        <tissue>Brown adipose tissue</tissue>
        <tissue>Kidney</tissue>
        <tissue>Lung</tissue>
        <tissue>Pancreas</tissue>
        <tissue>Spleen</tissue>
    </source>
</reference>
<reference key="7">
    <citation type="journal article" date="2014" name="Nat. Cell Biol.">
        <title>Foxk proteins repress the initiation of starvation-induced atrophy and autophagy programs.</title>
        <authorList>
            <person name="Bowman C.J."/>
            <person name="Ayer D.E."/>
            <person name="Dynlacht B.D."/>
        </authorList>
    </citation>
    <scope>FUNCTION</scope>
    <scope>SUBCELLULAR LOCATION</scope>
    <scope>INTERACTION WITH SIN3A</scope>
</reference>
<reference key="8">
    <citation type="journal article" date="2018" name="Mol. Cell">
        <title>mTORC1 promotes metabolic reprogramming by the suppression of GSK3-dependent foxk1 phosphorylation.</title>
        <authorList>
            <person name="He L."/>
            <person name="Gomes A.P."/>
            <person name="Wang X."/>
            <person name="Yoon S.O."/>
            <person name="Lee G."/>
            <person name="Nagiec M.J."/>
            <person name="Cho S."/>
            <person name="Chavez A."/>
            <person name="Islam T."/>
            <person name="Yu Y."/>
            <person name="Asara J.M."/>
            <person name="Kim B.Y."/>
            <person name="Blenis J."/>
        </authorList>
    </citation>
    <scope>FUNCTION</scope>
</reference>
<reference key="9">
    <citation type="journal article" date="2019" name="Nature">
        <title>FOXK1 and FOXK2 regulate aerobic glycolysis.</title>
        <authorList>
            <person name="Sukonina V."/>
            <person name="Ma H."/>
            <person name="Zhang W."/>
            <person name="Bartesaghi S."/>
            <person name="Subhash S."/>
            <person name="Heglind M."/>
            <person name="Foyn H."/>
            <person name="Betz M.J."/>
            <person name="Nilsson D."/>
            <person name="Lidell M.E."/>
            <person name="Naumann J."/>
            <person name="Haufs-Brusberg S."/>
            <person name="Palmgren H."/>
            <person name="Mondal T."/>
            <person name="Beg M."/>
            <person name="Jedrychowski M.P."/>
            <person name="Tasken K."/>
            <person name="Pfeifer A."/>
            <person name="Peng X.R."/>
            <person name="Kanduri C."/>
            <person name="Enerbaeck S."/>
        </authorList>
    </citation>
    <scope>FUNCTION</scope>
</reference>
<reference key="10">
    <citation type="journal article" date="2020" name="Genome Res.">
        <title>PR-DUB maintains the expression of critical genes through FOXK1/2- and ASXL1/2/3-dependent recruitment to chromatin and H2AK119ub1 deubiquitination.</title>
        <authorList>
            <person name="Kolovos P."/>
            <person name="Nishimura K."/>
            <person name="Sankar A."/>
            <person name="Sidoli S."/>
            <person name="Cloos P.A."/>
            <person name="Helin K."/>
            <person name="Christensen J."/>
        </authorList>
    </citation>
    <scope>FUNCTION</scope>
</reference>
<keyword id="KW-0010">Activator</keyword>
<keyword id="KW-0025">Alternative splicing</keyword>
<keyword id="KW-0963">Cytoplasm</keyword>
<keyword id="KW-0238">DNA-binding</keyword>
<keyword id="KW-1017">Isopeptide bond</keyword>
<keyword id="KW-0460">Magnesium</keyword>
<keyword id="KW-0479">Metal-binding</keyword>
<keyword id="KW-0488">Methylation</keyword>
<keyword id="KW-0539">Nucleus</keyword>
<keyword id="KW-0597">Phosphoprotein</keyword>
<keyword id="KW-1185">Reference proteome</keyword>
<keyword id="KW-0678">Repressor</keyword>
<keyword id="KW-0804">Transcription</keyword>
<keyword id="KW-0805">Transcription regulation</keyword>
<keyword id="KW-0832">Ubl conjugation</keyword>
<keyword id="KW-0833">Ubl conjugation pathway</keyword>
<name>FOXK2_MOUSE</name>
<sequence>MAAAAALSGAGAPPAGGGAGGGGSPPGGWAVARLEGREFEYLMKKRSVTIGRNSSQGSVDVSMGHSSFISRRHLEIFTPPGGGHSAAAPEPAQPRPDAGGDFYLRCLGKNGVFVDGVFQRRGAPPLQLPRVCTFRFPSTNIKITFTALSSEKREKQEAPESPVKPVQPHISPLTINIPDTMAHLISPLPSPTGTISAANSCPSSPRGAGSSGYKVGRVMPSDLSLMADNSQPENEKEASGGDSPKDDSKPPYSYAQLIVQAITMAPDKQLTLNGIYTHITKNYPYYRTADKGWQNSIRHNLSLNRYFIKVPRSQEEPGKGSFWRIDPASESKLVEQAFRKRRPRGVPCFRTPLGPLSSRSAPASPNHAGVLSAHSSGAQTPESLSREGSPAPLEPEPGASQPKLAVIQEARFAQSAPGSPLSSQPVLITVQRQLPPAIKPVTYTVATPVTTPTSQPPVVQTVHVVHQIPAVSVTSVAGLAPANTYTVAGQAVVTQAAVLAPPNPEPQENGDHREVRVKVEPVPAISPATLGAASRIIQTSQGTPVQTVTIVQQAPLGQHQLPIKTVTQNGAHVVPMPTAVHSQVNNAAASPLHMLATHASASASLPTKRQNGDQAEQPELKRVKAEDGESIVIALSVDAPPAAVREKAIQN</sequence>